<keyword id="KW-0067">ATP-binding</keyword>
<keyword id="KW-0436">Ligase</keyword>
<keyword id="KW-0479">Metal-binding</keyword>
<keyword id="KW-0547">Nucleotide-binding</keyword>
<keyword id="KW-0671">Queuosine biosynthesis</keyword>
<keyword id="KW-0862">Zinc</keyword>
<comment type="function">
    <text evidence="1">Catalyzes the ATP-dependent conversion of 7-carboxy-7-deazaguanine (CDG) to 7-cyano-7-deazaguanine (preQ(0)).</text>
</comment>
<comment type="catalytic activity">
    <reaction evidence="1">
        <text>7-carboxy-7-deazaguanine + NH4(+) + ATP = 7-cyano-7-deazaguanine + ADP + phosphate + H2O + H(+)</text>
        <dbReference type="Rhea" id="RHEA:27982"/>
        <dbReference type="ChEBI" id="CHEBI:15377"/>
        <dbReference type="ChEBI" id="CHEBI:15378"/>
        <dbReference type="ChEBI" id="CHEBI:28938"/>
        <dbReference type="ChEBI" id="CHEBI:30616"/>
        <dbReference type="ChEBI" id="CHEBI:43474"/>
        <dbReference type="ChEBI" id="CHEBI:45075"/>
        <dbReference type="ChEBI" id="CHEBI:61036"/>
        <dbReference type="ChEBI" id="CHEBI:456216"/>
        <dbReference type="EC" id="6.3.4.20"/>
    </reaction>
</comment>
<comment type="cofactor">
    <cofactor evidence="1">
        <name>Zn(2+)</name>
        <dbReference type="ChEBI" id="CHEBI:29105"/>
    </cofactor>
    <text evidence="1">Binds 1 zinc ion per subunit.</text>
</comment>
<comment type="pathway">
    <text evidence="1">Purine metabolism; 7-cyano-7-deazaguanine biosynthesis.</text>
</comment>
<comment type="similarity">
    <text evidence="1">Belongs to the QueC family.</text>
</comment>
<comment type="sequence caution" evidence="2">
    <conflict type="erroneous initiation">
        <sequence resource="EMBL-CDS" id="AAX64403"/>
    </conflict>
</comment>
<proteinExistence type="inferred from homology"/>
<sequence>MKRAVVVFSGGQDSTTCLAQARHQYDEVHCVTFDYGQRHRAEIDVARELALKLGARAHKVLDVTLLNELAVSSLTRDSIPVPDYEPNADGIPNTFVPGRNILFLTLAAIYAYQVKAEAVITGVCETDFSGYPDCRDEFVKALNHAVNLGMAKDIRFETPLMWIDKAETWALADYWGQLDLVREETLTCYNGIKGDGCGHCAACNLRANGLNHYLSNKAAVMAAMKQKTGLR</sequence>
<dbReference type="EC" id="6.3.4.20" evidence="1"/>
<dbReference type="EMBL" id="AE017220">
    <property type="protein sequence ID" value="AAX64403.1"/>
    <property type="status" value="ALT_INIT"/>
    <property type="molecule type" value="Genomic_DNA"/>
</dbReference>
<dbReference type="RefSeq" id="WP_000817214.1">
    <property type="nucleotide sequence ID" value="NC_006905.1"/>
</dbReference>
<dbReference type="SMR" id="Q57SA8"/>
<dbReference type="KEGG" id="sec:SCH_0497"/>
<dbReference type="HOGENOM" id="CLU_081854_0_0_6"/>
<dbReference type="UniPathway" id="UPA00391"/>
<dbReference type="Proteomes" id="UP000000538">
    <property type="component" value="Chromosome"/>
</dbReference>
<dbReference type="GO" id="GO:0005524">
    <property type="term" value="F:ATP binding"/>
    <property type="evidence" value="ECO:0007669"/>
    <property type="project" value="UniProtKB-UniRule"/>
</dbReference>
<dbReference type="GO" id="GO:0016879">
    <property type="term" value="F:ligase activity, forming carbon-nitrogen bonds"/>
    <property type="evidence" value="ECO:0007669"/>
    <property type="project" value="UniProtKB-UniRule"/>
</dbReference>
<dbReference type="GO" id="GO:0008270">
    <property type="term" value="F:zinc ion binding"/>
    <property type="evidence" value="ECO:0007669"/>
    <property type="project" value="UniProtKB-UniRule"/>
</dbReference>
<dbReference type="GO" id="GO:0008616">
    <property type="term" value="P:queuosine biosynthetic process"/>
    <property type="evidence" value="ECO:0007669"/>
    <property type="project" value="UniProtKB-UniRule"/>
</dbReference>
<dbReference type="CDD" id="cd01995">
    <property type="entry name" value="QueC-like"/>
    <property type="match status" value="1"/>
</dbReference>
<dbReference type="FunFam" id="3.40.50.620:FF:000017">
    <property type="entry name" value="7-cyano-7-deazaguanine synthase"/>
    <property type="match status" value="1"/>
</dbReference>
<dbReference type="Gene3D" id="3.40.50.620">
    <property type="entry name" value="HUPs"/>
    <property type="match status" value="1"/>
</dbReference>
<dbReference type="HAMAP" id="MF_01633">
    <property type="entry name" value="QueC"/>
    <property type="match status" value="1"/>
</dbReference>
<dbReference type="InterPro" id="IPR018317">
    <property type="entry name" value="QueC"/>
</dbReference>
<dbReference type="InterPro" id="IPR014729">
    <property type="entry name" value="Rossmann-like_a/b/a_fold"/>
</dbReference>
<dbReference type="NCBIfam" id="TIGR00364">
    <property type="entry name" value="7-cyano-7-deazaguanine synthase QueC"/>
    <property type="match status" value="1"/>
</dbReference>
<dbReference type="NCBIfam" id="NF008317">
    <property type="entry name" value="PRK11106.1"/>
    <property type="match status" value="1"/>
</dbReference>
<dbReference type="PANTHER" id="PTHR42914">
    <property type="entry name" value="7-CYANO-7-DEAZAGUANINE SYNTHASE"/>
    <property type="match status" value="1"/>
</dbReference>
<dbReference type="PANTHER" id="PTHR42914:SF1">
    <property type="entry name" value="7-CYANO-7-DEAZAGUANINE SYNTHASE"/>
    <property type="match status" value="1"/>
</dbReference>
<dbReference type="Pfam" id="PF06508">
    <property type="entry name" value="QueC"/>
    <property type="match status" value="1"/>
</dbReference>
<dbReference type="PIRSF" id="PIRSF006293">
    <property type="entry name" value="ExsB"/>
    <property type="match status" value="1"/>
</dbReference>
<dbReference type="SUPFAM" id="SSF52402">
    <property type="entry name" value="Adenine nucleotide alpha hydrolases-like"/>
    <property type="match status" value="1"/>
</dbReference>
<feature type="chain" id="PRO_0000246917" description="7-cyano-7-deazaguanine synthase">
    <location>
        <begin position="1"/>
        <end position="231"/>
    </location>
</feature>
<feature type="binding site" evidence="1">
    <location>
        <begin position="8"/>
        <end position="18"/>
    </location>
    <ligand>
        <name>ATP</name>
        <dbReference type="ChEBI" id="CHEBI:30616"/>
    </ligand>
</feature>
<feature type="binding site" evidence="1">
    <location>
        <position position="188"/>
    </location>
    <ligand>
        <name>Zn(2+)</name>
        <dbReference type="ChEBI" id="CHEBI:29105"/>
    </ligand>
</feature>
<feature type="binding site" evidence="1">
    <location>
        <position position="197"/>
    </location>
    <ligand>
        <name>Zn(2+)</name>
        <dbReference type="ChEBI" id="CHEBI:29105"/>
    </ligand>
</feature>
<feature type="binding site" evidence="1">
    <location>
        <position position="200"/>
    </location>
    <ligand>
        <name>Zn(2+)</name>
        <dbReference type="ChEBI" id="CHEBI:29105"/>
    </ligand>
</feature>
<feature type="binding site" evidence="1">
    <location>
        <position position="203"/>
    </location>
    <ligand>
        <name>Zn(2+)</name>
        <dbReference type="ChEBI" id="CHEBI:29105"/>
    </ligand>
</feature>
<organism>
    <name type="scientific">Salmonella choleraesuis (strain SC-B67)</name>
    <dbReference type="NCBI Taxonomy" id="321314"/>
    <lineage>
        <taxon>Bacteria</taxon>
        <taxon>Pseudomonadati</taxon>
        <taxon>Pseudomonadota</taxon>
        <taxon>Gammaproteobacteria</taxon>
        <taxon>Enterobacterales</taxon>
        <taxon>Enterobacteriaceae</taxon>
        <taxon>Salmonella</taxon>
    </lineage>
</organism>
<protein>
    <recommendedName>
        <fullName evidence="1">7-cyano-7-deazaguanine synthase</fullName>
        <ecNumber evidence="1">6.3.4.20</ecNumber>
    </recommendedName>
    <alternativeName>
        <fullName evidence="1">7-cyano-7-carbaguanine synthase</fullName>
    </alternativeName>
    <alternativeName>
        <fullName evidence="1">PreQ(0) synthase</fullName>
    </alternativeName>
    <alternativeName>
        <fullName evidence="1">Queuosine biosynthesis protein QueC</fullName>
    </alternativeName>
</protein>
<evidence type="ECO:0000255" key="1">
    <source>
        <dbReference type="HAMAP-Rule" id="MF_01633"/>
    </source>
</evidence>
<evidence type="ECO:0000305" key="2"/>
<gene>
    <name evidence="1" type="primary">queC</name>
    <name type="ordered locus">SCH_0497</name>
</gene>
<name>QUEC_SALCH</name>
<accession>Q57SA8</accession>
<reference key="1">
    <citation type="journal article" date="2005" name="Nucleic Acids Res.">
        <title>The genome sequence of Salmonella enterica serovar Choleraesuis, a highly invasive and resistant zoonotic pathogen.</title>
        <authorList>
            <person name="Chiu C.-H."/>
            <person name="Tang P."/>
            <person name="Chu C."/>
            <person name="Hu S."/>
            <person name="Bao Q."/>
            <person name="Yu J."/>
            <person name="Chou Y.-Y."/>
            <person name="Wang H.-S."/>
            <person name="Lee Y.-S."/>
        </authorList>
    </citation>
    <scope>NUCLEOTIDE SEQUENCE [LARGE SCALE GENOMIC DNA]</scope>
    <source>
        <strain>SC-B67</strain>
    </source>
</reference>